<name>TRPA_FLAPJ</name>
<gene>
    <name evidence="1" type="primary">trpA</name>
    <name type="ordered locus">FP0507</name>
</gene>
<protein>
    <recommendedName>
        <fullName evidence="1">Tryptophan synthase alpha chain</fullName>
        <ecNumber evidence="1">4.2.1.20</ecNumber>
    </recommendedName>
</protein>
<comment type="function">
    <text evidence="1">The alpha subunit is responsible for the aldol cleavage of indoleglycerol phosphate to indole and glyceraldehyde 3-phosphate.</text>
</comment>
<comment type="catalytic activity">
    <reaction evidence="1">
        <text>(1S,2R)-1-C-(indol-3-yl)glycerol 3-phosphate + L-serine = D-glyceraldehyde 3-phosphate + L-tryptophan + H2O</text>
        <dbReference type="Rhea" id="RHEA:10532"/>
        <dbReference type="ChEBI" id="CHEBI:15377"/>
        <dbReference type="ChEBI" id="CHEBI:33384"/>
        <dbReference type="ChEBI" id="CHEBI:57912"/>
        <dbReference type="ChEBI" id="CHEBI:58866"/>
        <dbReference type="ChEBI" id="CHEBI:59776"/>
        <dbReference type="EC" id="4.2.1.20"/>
    </reaction>
</comment>
<comment type="pathway">
    <text evidence="1">Amino-acid biosynthesis; L-tryptophan biosynthesis; L-tryptophan from chorismate: step 5/5.</text>
</comment>
<comment type="subunit">
    <text evidence="1">Tetramer of two alpha and two beta chains.</text>
</comment>
<comment type="similarity">
    <text evidence="1">Belongs to the TrpA family.</text>
</comment>
<dbReference type="EC" id="4.2.1.20" evidence="1"/>
<dbReference type="EMBL" id="AM398681">
    <property type="protein sequence ID" value="CAL42613.1"/>
    <property type="molecule type" value="Genomic_DNA"/>
</dbReference>
<dbReference type="RefSeq" id="WP_011962671.1">
    <property type="nucleotide sequence ID" value="NC_009613.3"/>
</dbReference>
<dbReference type="RefSeq" id="YP_001295431.1">
    <property type="nucleotide sequence ID" value="NC_009613.3"/>
</dbReference>
<dbReference type="SMR" id="A6GWZ0"/>
<dbReference type="STRING" id="402612.FP0507"/>
<dbReference type="EnsemblBacteria" id="CAL42613">
    <property type="protein sequence ID" value="CAL42613"/>
    <property type="gene ID" value="FP0507"/>
</dbReference>
<dbReference type="KEGG" id="fps:FP0507"/>
<dbReference type="PATRIC" id="fig|402612.5.peg.519"/>
<dbReference type="eggNOG" id="COG0159">
    <property type="taxonomic scope" value="Bacteria"/>
</dbReference>
<dbReference type="HOGENOM" id="CLU_016734_0_0_10"/>
<dbReference type="OrthoDB" id="9804578at2"/>
<dbReference type="UniPathway" id="UPA00035">
    <property type="reaction ID" value="UER00044"/>
</dbReference>
<dbReference type="Proteomes" id="UP000006394">
    <property type="component" value="Chromosome"/>
</dbReference>
<dbReference type="GO" id="GO:0005829">
    <property type="term" value="C:cytosol"/>
    <property type="evidence" value="ECO:0007669"/>
    <property type="project" value="TreeGrafter"/>
</dbReference>
<dbReference type="GO" id="GO:0004834">
    <property type="term" value="F:tryptophan synthase activity"/>
    <property type="evidence" value="ECO:0007669"/>
    <property type="project" value="UniProtKB-UniRule"/>
</dbReference>
<dbReference type="CDD" id="cd04724">
    <property type="entry name" value="Tryptophan_synthase_alpha"/>
    <property type="match status" value="1"/>
</dbReference>
<dbReference type="FunFam" id="3.20.20.70:FF:000037">
    <property type="entry name" value="Tryptophan synthase alpha chain"/>
    <property type="match status" value="1"/>
</dbReference>
<dbReference type="Gene3D" id="3.20.20.70">
    <property type="entry name" value="Aldolase class I"/>
    <property type="match status" value="1"/>
</dbReference>
<dbReference type="HAMAP" id="MF_00131">
    <property type="entry name" value="Trp_synth_alpha"/>
    <property type="match status" value="1"/>
</dbReference>
<dbReference type="InterPro" id="IPR013785">
    <property type="entry name" value="Aldolase_TIM"/>
</dbReference>
<dbReference type="InterPro" id="IPR011060">
    <property type="entry name" value="RibuloseP-bd_barrel"/>
</dbReference>
<dbReference type="InterPro" id="IPR018204">
    <property type="entry name" value="Trp_synthase_alpha_AS"/>
</dbReference>
<dbReference type="InterPro" id="IPR002028">
    <property type="entry name" value="Trp_synthase_suA"/>
</dbReference>
<dbReference type="NCBIfam" id="TIGR00262">
    <property type="entry name" value="trpA"/>
    <property type="match status" value="1"/>
</dbReference>
<dbReference type="PANTHER" id="PTHR43406:SF1">
    <property type="entry name" value="TRYPTOPHAN SYNTHASE ALPHA CHAIN, CHLOROPLASTIC"/>
    <property type="match status" value="1"/>
</dbReference>
<dbReference type="PANTHER" id="PTHR43406">
    <property type="entry name" value="TRYPTOPHAN SYNTHASE, ALPHA CHAIN"/>
    <property type="match status" value="1"/>
</dbReference>
<dbReference type="Pfam" id="PF00290">
    <property type="entry name" value="Trp_syntA"/>
    <property type="match status" value="1"/>
</dbReference>
<dbReference type="SUPFAM" id="SSF51366">
    <property type="entry name" value="Ribulose-phoshate binding barrel"/>
    <property type="match status" value="1"/>
</dbReference>
<dbReference type="PROSITE" id="PS00167">
    <property type="entry name" value="TRP_SYNTHASE_ALPHA"/>
    <property type="match status" value="1"/>
</dbReference>
<keyword id="KW-0028">Amino-acid biosynthesis</keyword>
<keyword id="KW-0057">Aromatic amino acid biosynthesis</keyword>
<keyword id="KW-0456">Lyase</keyword>
<keyword id="KW-1185">Reference proteome</keyword>
<keyword id="KW-0822">Tryptophan biosynthesis</keyword>
<evidence type="ECO:0000255" key="1">
    <source>
        <dbReference type="HAMAP-Rule" id="MF_00131"/>
    </source>
</evidence>
<organism>
    <name type="scientific">Flavobacterium psychrophilum (strain ATCC 49511 / DSM 21280 / CIP 103535 / JIP02/86)</name>
    <dbReference type="NCBI Taxonomy" id="402612"/>
    <lineage>
        <taxon>Bacteria</taxon>
        <taxon>Pseudomonadati</taxon>
        <taxon>Bacteroidota</taxon>
        <taxon>Flavobacteriia</taxon>
        <taxon>Flavobacteriales</taxon>
        <taxon>Flavobacteriaceae</taxon>
        <taxon>Flavobacterium</taxon>
    </lineage>
</organism>
<proteinExistence type="inferred from homology"/>
<feature type="chain" id="PRO_1000018201" description="Tryptophan synthase alpha chain">
    <location>
        <begin position="1"/>
        <end position="253"/>
    </location>
</feature>
<feature type="active site" description="Proton acceptor" evidence="1">
    <location>
        <position position="45"/>
    </location>
</feature>
<feature type="active site" description="Proton acceptor" evidence="1">
    <location>
        <position position="56"/>
    </location>
</feature>
<sequence>MNRINQKLQEDKKILSIYFSAGYPNLNDTVQIIQDLEKSGVDMIEIGLPFSDPLADGPTIQESSTQALENGMTTKLLFEQLKNIRQTVQIPLIIMGYFNPILQYGVENFCKKCQETGIDGLIIPDLPVDIYAENYKETFEKHGLTNVFLITPQTSNERIRHIDSVSNGFIYLVSSASVTGSSSGFDNIQTNYFKRISEMNLKNPQIIGFGINNKETFNQATQYQKGAIIGSAFIKNLTENGVSSISKFVSEIF</sequence>
<reference key="1">
    <citation type="journal article" date="2007" name="Nat. Biotechnol.">
        <title>Complete genome sequence of the fish pathogen Flavobacterium psychrophilum.</title>
        <authorList>
            <person name="Duchaud E."/>
            <person name="Boussaha M."/>
            <person name="Loux V."/>
            <person name="Bernardet J.-F."/>
            <person name="Michel C."/>
            <person name="Kerouault B."/>
            <person name="Mondot S."/>
            <person name="Nicolas P."/>
            <person name="Bossy R."/>
            <person name="Caron C."/>
            <person name="Bessieres P."/>
            <person name="Gibrat J.-F."/>
            <person name="Claverol S."/>
            <person name="Dumetz F."/>
            <person name="Le Henaff M."/>
            <person name="Benmansour A."/>
        </authorList>
    </citation>
    <scope>NUCLEOTIDE SEQUENCE [LARGE SCALE GENOMIC DNA]</scope>
    <source>
        <strain>ATCC 49511 / DSM 21280 / CIP 103535 / JIP02/86</strain>
    </source>
</reference>
<accession>A6GWZ0</accession>